<gene>
    <name evidence="1" type="primary">cysA</name>
    <name type="ordered locus">slr1455</name>
</gene>
<proteinExistence type="inferred from homology"/>
<accession>P74548</accession>
<name>CYSA_SYNY3</name>
<evidence type="ECO:0000255" key="1">
    <source>
        <dbReference type="HAMAP-Rule" id="MF_01701"/>
    </source>
</evidence>
<organism>
    <name type="scientific">Synechocystis sp. (strain ATCC 27184 / PCC 6803 / Kazusa)</name>
    <dbReference type="NCBI Taxonomy" id="1111708"/>
    <lineage>
        <taxon>Bacteria</taxon>
        <taxon>Bacillati</taxon>
        <taxon>Cyanobacteriota</taxon>
        <taxon>Cyanophyceae</taxon>
        <taxon>Synechococcales</taxon>
        <taxon>Merismopediaceae</taxon>
        <taxon>Synechocystis</taxon>
    </lineage>
</organism>
<dbReference type="EC" id="7.3.2.3" evidence="1"/>
<dbReference type="EMBL" id="BA000022">
    <property type="protein sequence ID" value="BAA18655.1"/>
    <property type="molecule type" value="Genomic_DNA"/>
</dbReference>
<dbReference type="PIR" id="S76743">
    <property type="entry name" value="S76743"/>
</dbReference>
<dbReference type="SMR" id="P74548"/>
<dbReference type="IntAct" id="P74548">
    <property type="interactions" value="1"/>
</dbReference>
<dbReference type="STRING" id="1148.gene:10500421"/>
<dbReference type="PaxDb" id="1148-1653744"/>
<dbReference type="EnsemblBacteria" id="BAA18655">
    <property type="protein sequence ID" value="BAA18655"/>
    <property type="gene ID" value="BAA18655"/>
</dbReference>
<dbReference type="KEGG" id="syn:slr1455"/>
<dbReference type="eggNOG" id="COG1118">
    <property type="taxonomic scope" value="Bacteria"/>
</dbReference>
<dbReference type="InParanoid" id="P74548"/>
<dbReference type="PhylomeDB" id="P74548"/>
<dbReference type="Proteomes" id="UP000001425">
    <property type="component" value="Chromosome"/>
</dbReference>
<dbReference type="GO" id="GO:0043190">
    <property type="term" value="C:ATP-binding cassette (ABC) transporter complex"/>
    <property type="evidence" value="ECO:0007669"/>
    <property type="project" value="InterPro"/>
</dbReference>
<dbReference type="GO" id="GO:0015419">
    <property type="term" value="F:ABC-type sulfate transporter activity"/>
    <property type="evidence" value="ECO:0007669"/>
    <property type="project" value="InterPro"/>
</dbReference>
<dbReference type="GO" id="GO:0102025">
    <property type="term" value="F:ABC-type thiosulfate transporter activity"/>
    <property type="evidence" value="ECO:0007669"/>
    <property type="project" value="RHEA"/>
</dbReference>
<dbReference type="GO" id="GO:0005524">
    <property type="term" value="F:ATP binding"/>
    <property type="evidence" value="ECO:0007669"/>
    <property type="project" value="UniProtKB-KW"/>
</dbReference>
<dbReference type="GO" id="GO:0016887">
    <property type="term" value="F:ATP hydrolysis activity"/>
    <property type="evidence" value="ECO:0007669"/>
    <property type="project" value="InterPro"/>
</dbReference>
<dbReference type="GO" id="GO:1902358">
    <property type="term" value="P:sulfate transmembrane transport"/>
    <property type="evidence" value="ECO:0000318"/>
    <property type="project" value="GO_Central"/>
</dbReference>
<dbReference type="CDD" id="cd03296">
    <property type="entry name" value="ABC_CysA_sulfate_importer"/>
    <property type="match status" value="1"/>
</dbReference>
<dbReference type="FunFam" id="3.40.50.300:FF:000227">
    <property type="entry name" value="Sulfate/thiosulfate import ATP-binding protein CysA"/>
    <property type="match status" value="1"/>
</dbReference>
<dbReference type="Gene3D" id="3.40.50.300">
    <property type="entry name" value="P-loop containing nucleotide triphosphate hydrolases"/>
    <property type="match status" value="1"/>
</dbReference>
<dbReference type="InterPro" id="IPR003593">
    <property type="entry name" value="AAA+_ATPase"/>
</dbReference>
<dbReference type="InterPro" id="IPR050093">
    <property type="entry name" value="ABC_SmlMolc_Importer"/>
</dbReference>
<dbReference type="InterPro" id="IPR003439">
    <property type="entry name" value="ABC_transporter-like_ATP-bd"/>
</dbReference>
<dbReference type="InterPro" id="IPR017871">
    <property type="entry name" value="ABC_transporter-like_CS"/>
</dbReference>
<dbReference type="InterPro" id="IPR008995">
    <property type="entry name" value="Mo/tungstate-bd_C_term_dom"/>
</dbReference>
<dbReference type="InterPro" id="IPR027417">
    <property type="entry name" value="P-loop_NTPase"/>
</dbReference>
<dbReference type="InterPro" id="IPR005666">
    <property type="entry name" value="Sulph_transpt1"/>
</dbReference>
<dbReference type="InterPro" id="IPR013611">
    <property type="entry name" value="Transp-assoc_OB_typ2"/>
</dbReference>
<dbReference type="NCBIfam" id="TIGR00968">
    <property type="entry name" value="3a0106s01"/>
    <property type="match status" value="1"/>
</dbReference>
<dbReference type="PANTHER" id="PTHR42781">
    <property type="entry name" value="SPERMIDINE/PUTRESCINE IMPORT ATP-BINDING PROTEIN POTA"/>
    <property type="match status" value="1"/>
</dbReference>
<dbReference type="PANTHER" id="PTHR42781:SF4">
    <property type="entry name" value="SPERMIDINE_PUTRESCINE IMPORT ATP-BINDING PROTEIN POTA"/>
    <property type="match status" value="1"/>
</dbReference>
<dbReference type="Pfam" id="PF00005">
    <property type="entry name" value="ABC_tran"/>
    <property type="match status" value="1"/>
</dbReference>
<dbReference type="Pfam" id="PF08402">
    <property type="entry name" value="TOBE_2"/>
    <property type="match status" value="1"/>
</dbReference>
<dbReference type="SMART" id="SM00382">
    <property type="entry name" value="AAA"/>
    <property type="match status" value="1"/>
</dbReference>
<dbReference type="SUPFAM" id="SSF50331">
    <property type="entry name" value="MOP-like"/>
    <property type="match status" value="1"/>
</dbReference>
<dbReference type="SUPFAM" id="SSF52540">
    <property type="entry name" value="P-loop containing nucleoside triphosphate hydrolases"/>
    <property type="match status" value="1"/>
</dbReference>
<dbReference type="PROSITE" id="PS00211">
    <property type="entry name" value="ABC_TRANSPORTER_1"/>
    <property type="match status" value="1"/>
</dbReference>
<dbReference type="PROSITE" id="PS50893">
    <property type="entry name" value="ABC_TRANSPORTER_2"/>
    <property type="match status" value="1"/>
</dbReference>
<dbReference type="PROSITE" id="PS51237">
    <property type="entry name" value="CYSA"/>
    <property type="match status" value="1"/>
</dbReference>
<protein>
    <recommendedName>
        <fullName evidence="1">Sulfate/thiosulfate import ATP-binding protein CysA</fullName>
        <ecNumber evidence="1">7.3.2.3</ecNumber>
    </recommendedName>
    <alternativeName>
        <fullName evidence="1">Sulfate-transporting ATPase</fullName>
    </alternativeName>
</protein>
<reference key="1">
    <citation type="journal article" date="1996" name="DNA Res.">
        <title>Sequence analysis of the genome of the unicellular cyanobacterium Synechocystis sp. strain PCC6803. II. Sequence determination of the entire genome and assignment of potential protein-coding regions.</title>
        <authorList>
            <person name="Kaneko T."/>
            <person name="Sato S."/>
            <person name="Kotani H."/>
            <person name="Tanaka A."/>
            <person name="Asamizu E."/>
            <person name="Nakamura Y."/>
            <person name="Miyajima N."/>
            <person name="Hirosawa M."/>
            <person name="Sugiura M."/>
            <person name="Sasamoto S."/>
            <person name="Kimura T."/>
            <person name="Hosouchi T."/>
            <person name="Matsuno A."/>
            <person name="Muraki A."/>
            <person name="Nakazaki N."/>
            <person name="Naruo K."/>
            <person name="Okumura S."/>
            <person name="Shimpo S."/>
            <person name="Takeuchi C."/>
            <person name="Wada T."/>
            <person name="Watanabe A."/>
            <person name="Yamada M."/>
            <person name="Yasuda M."/>
            <person name="Tabata S."/>
        </authorList>
    </citation>
    <scope>NUCLEOTIDE SEQUENCE [LARGE SCALE GENOMIC DNA]</scope>
    <source>
        <strain>ATCC 27184 / PCC 6803 / Kazusa</strain>
    </source>
</reference>
<comment type="function">
    <text evidence="1">Part of the ABC transporter complex CysAWTP involved in sulfate/thiosulfate import. Responsible for energy coupling to the transport system.</text>
</comment>
<comment type="catalytic activity">
    <reaction evidence="1">
        <text>sulfate(out) + ATP + H2O = sulfate(in) + ADP + phosphate + H(+)</text>
        <dbReference type="Rhea" id="RHEA:10192"/>
        <dbReference type="ChEBI" id="CHEBI:15377"/>
        <dbReference type="ChEBI" id="CHEBI:15378"/>
        <dbReference type="ChEBI" id="CHEBI:16189"/>
        <dbReference type="ChEBI" id="CHEBI:30616"/>
        <dbReference type="ChEBI" id="CHEBI:43474"/>
        <dbReference type="ChEBI" id="CHEBI:456216"/>
        <dbReference type="EC" id="7.3.2.3"/>
    </reaction>
</comment>
<comment type="catalytic activity">
    <reaction evidence="1">
        <text>thiosulfate(out) + ATP + H2O = thiosulfate(in) + ADP + phosphate + H(+)</text>
        <dbReference type="Rhea" id="RHEA:29871"/>
        <dbReference type="ChEBI" id="CHEBI:15377"/>
        <dbReference type="ChEBI" id="CHEBI:15378"/>
        <dbReference type="ChEBI" id="CHEBI:30616"/>
        <dbReference type="ChEBI" id="CHEBI:33542"/>
        <dbReference type="ChEBI" id="CHEBI:43474"/>
        <dbReference type="ChEBI" id="CHEBI:456216"/>
        <dbReference type="EC" id="7.3.2.3"/>
    </reaction>
</comment>
<comment type="subunit">
    <text evidence="1">The complex is composed of two ATP-binding proteins (CysA), two transmembrane proteins (CysT and CysW) and a solute-binding protein (CysP).</text>
</comment>
<comment type="subcellular location">
    <subcellularLocation>
        <location evidence="1">Cell inner membrane</location>
        <topology evidence="1">Peripheral membrane protein</topology>
    </subcellularLocation>
</comment>
<comment type="similarity">
    <text evidence="1">Belongs to the ABC transporter superfamily. Sulfate/tungstate importer (TC 3.A.1.6) family.</text>
</comment>
<keyword id="KW-0067">ATP-binding</keyword>
<keyword id="KW-0997">Cell inner membrane</keyword>
<keyword id="KW-1003">Cell membrane</keyword>
<keyword id="KW-0472">Membrane</keyword>
<keyword id="KW-0547">Nucleotide-binding</keyword>
<keyword id="KW-1185">Reference proteome</keyword>
<keyword id="KW-0764">Sulfate transport</keyword>
<keyword id="KW-1278">Translocase</keyword>
<keyword id="KW-0813">Transport</keyword>
<sequence length="355" mass="39195">MSIIINNVSKQFGDFTALKDINLEVPDGKLVALLGPSGSGKSTLLRAIAGLEEPDQGQIIINGQDATHVDIRKRNIGFVFQHYALFKHLTIRQNIAFGLEIRKHPPAKTKERVEELLSLIQLEGLGNRYPSQLSGGQRQRVALARALAVQPQVLLLDEPFGALDAKVRKELRAWLRKLHDEVHLTSVFVTHDQEEAMEVADEIVVMSNGKIEQVGTAEEIYEHPASPFVMGFIGEVNVLPRNASLFNYHAFEPHSSNNGHQEPVFVRPHDFELLTEADDASVAGTIKRVIHLGSEIQVEVLLMDNTAVLAYLNREQGQQLNPKAGKKVFIKPRVAKVFAGASSAASTHFIYGTGI</sequence>
<feature type="chain" id="PRO_0000092297" description="Sulfate/thiosulfate import ATP-binding protein CysA">
    <location>
        <begin position="1"/>
        <end position="355"/>
    </location>
</feature>
<feature type="domain" description="ABC transporter" evidence="1">
    <location>
        <begin position="3"/>
        <end position="233"/>
    </location>
</feature>
<feature type="binding site" evidence="1">
    <location>
        <begin position="35"/>
        <end position="42"/>
    </location>
    <ligand>
        <name>ATP</name>
        <dbReference type="ChEBI" id="CHEBI:30616"/>
    </ligand>
</feature>